<name>RISB_CITK8</name>
<sequence length="156" mass="16157">MNIIEANVATPDARVAITIARFNNFINDSLLEGAIDALKRIGQVKDENITVVWVPGAYELPLAAGALAKTGKYDAVIALGTVIRGGTAHFEYVAGGASNGLAHVAQDSEIPVAFGVLTTESIEQAIERAGTKAGNKGAEAALTALEMINVLKAIKA</sequence>
<feature type="chain" id="PRO_1000040400" description="6,7-dimethyl-8-ribityllumazine synthase">
    <location>
        <begin position="1"/>
        <end position="156"/>
    </location>
</feature>
<feature type="active site" description="Proton donor" evidence="1">
    <location>
        <position position="89"/>
    </location>
</feature>
<feature type="binding site" evidence="1">
    <location>
        <position position="22"/>
    </location>
    <ligand>
        <name>5-amino-6-(D-ribitylamino)uracil</name>
        <dbReference type="ChEBI" id="CHEBI:15934"/>
    </ligand>
</feature>
<feature type="binding site" evidence="1">
    <location>
        <begin position="57"/>
        <end position="59"/>
    </location>
    <ligand>
        <name>5-amino-6-(D-ribitylamino)uracil</name>
        <dbReference type="ChEBI" id="CHEBI:15934"/>
    </ligand>
</feature>
<feature type="binding site" evidence="1">
    <location>
        <begin position="81"/>
        <end position="83"/>
    </location>
    <ligand>
        <name>5-amino-6-(D-ribitylamino)uracil</name>
        <dbReference type="ChEBI" id="CHEBI:15934"/>
    </ligand>
</feature>
<feature type="binding site" evidence="1">
    <location>
        <begin position="86"/>
        <end position="87"/>
    </location>
    <ligand>
        <name>(2S)-2-hydroxy-3-oxobutyl phosphate</name>
        <dbReference type="ChEBI" id="CHEBI:58830"/>
    </ligand>
</feature>
<feature type="binding site" evidence="1">
    <location>
        <position position="114"/>
    </location>
    <ligand>
        <name>5-amino-6-(D-ribitylamino)uracil</name>
        <dbReference type="ChEBI" id="CHEBI:15934"/>
    </ligand>
</feature>
<feature type="binding site" evidence="1">
    <location>
        <position position="128"/>
    </location>
    <ligand>
        <name>(2S)-2-hydroxy-3-oxobutyl phosphate</name>
        <dbReference type="ChEBI" id="CHEBI:58830"/>
    </ligand>
</feature>
<keyword id="KW-1185">Reference proteome</keyword>
<keyword id="KW-0686">Riboflavin biosynthesis</keyword>
<keyword id="KW-0808">Transferase</keyword>
<protein>
    <recommendedName>
        <fullName evidence="1">6,7-dimethyl-8-ribityllumazine synthase</fullName>
        <shortName evidence="1">DMRL synthase</shortName>
        <shortName evidence="1">LS</shortName>
        <shortName evidence="1">Lumazine synthase</shortName>
        <ecNumber evidence="1">2.5.1.78</ecNumber>
    </recommendedName>
</protein>
<reference key="1">
    <citation type="submission" date="2007-08" db="EMBL/GenBank/DDBJ databases">
        <authorList>
            <consortium name="The Citrobacter koseri Genome Sequencing Project"/>
            <person name="McClelland M."/>
            <person name="Sanderson E.K."/>
            <person name="Porwollik S."/>
            <person name="Spieth J."/>
            <person name="Clifton W.S."/>
            <person name="Latreille P."/>
            <person name="Courtney L."/>
            <person name="Wang C."/>
            <person name="Pepin K."/>
            <person name="Bhonagiri V."/>
            <person name="Nash W."/>
            <person name="Johnson M."/>
            <person name="Thiruvilangam P."/>
            <person name="Wilson R."/>
        </authorList>
    </citation>
    <scope>NUCLEOTIDE SEQUENCE [LARGE SCALE GENOMIC DNA]</scope>
    <source>
        <strain>ATCC BAA-895 / CDC 4225-83 / SGSC4696</strain>
    </source>
</reference>
<accession>A8AK39</accession>
<comment type="function">
    <text evidence="1">Catalyzes the formation of 6,7-dimethyl-8-ribityllumazine by condensation of 5-amino-6-(D-ribitylamino)uracil with 3,4-dihydroxy-2-butanone 4-phosphate. This is the penultimate step in the biosynthesis of riboflavin.</text>
</comment>
<comment type="catalytic activity">
    <reaction evidence="1">
        <text>(2S)-2-hydroxy-3-oxobutyl phosphate + 5-amino-6-(D-ribitylamino)uracil = 6,7-dimethyl-8-(1-D-ribityl)lumazine + phosphate + 2 H2O + H(+)</text>
        <dbReference type="Rhea" id="RHEA:26152"/>
        <dbReference type="ChEBI" id="CHEBI:15377"/>
        <dbReference type="ChEBI" id="CHEBI:15378"/>
        <dbReference type="ChEBI" id="CHEBI:15934"/>
        <dbReference type="ChEBI" id="CHEBI:43474"/>
        <dbReference type="ChEBI" id="CHEBI:58201"/>
        <dbReference type="ChEBI" id="CHEBI:58830"/>
        <dbReference type="EC" id="2.5.1.78"/>
    </reaction>
</comment>
<comment type="pathway">
    <text evidence="1">Cofactor biosynthesis; riboflavin biosynthesis; riboflavin from 2-hydroxy-3-oxobutyl phosphate and 5-amino-6-(D-ribitylamino)uracil: step 1/2.</text>
</comment>
<comment type="subunit">
    <text evidence="1">Forms an icosahedral capsid composed of 60 subunits, arranged as a dodecamer of pentamers.</text>
</comment>
<comment type="similarity">
    <text evidence="1">Belongs to the DMRL synthase family.</text>
</comment>
<organism>
    <name type="scientific">Citrobacter koseri (strain ATCC BAA-895 / CDC 4225-83 / SGSC4696)</name>
    <dbReference type="NCBI Taxonomy" id="290338"/>
    <lineage>
        <taxon>Bacteria</taxon>
        <taxon>Pseudomonadati</taxon>
        <taxon>Pseudomonadota</taxon>
        <taxon>Gammaproteobacteria</taxon>
        <taxon>Enterobacterales</taxon>
        <taxon>Enterobacteriaceae</taxon>
        <taxon>Citrobacter</taxon>
    </lineage>
</organism>
<proteinExistence type="inferred from homology"/>
<gene>
    <name evidence="1" type="primary">ribH</name>
    <name type="ordered locus">CKO_02746</name>
</gene>
<evidence type="ECO:0000255" key="1">
    <source>
        <dbReference type="HAMAP-Rule" id="MF_00178"/>
    </source>
</evidence>
<dbReference type="EC" id="2.5.1.78" evidence="1"/>
<dbReference type="EMBL" id="CP000822">
    <property type="protein sequence ID" value="ABV13852.1"/>
    <property type="molecule type" value="Genomic_DNA"/>
</dbReference>
<dbReference type="SMR" id="A8AK39"/>
<dbReference type="STRING" id="290338.CKO_02746"/>
<dbReference type="KEGG" id="cko:CKO_02746"/>
<dbReference type="HOGENOM" id="CLU_089358_1_1_6"/>
<dbReference type="OrthoDB" id="9809709at2"/>
<dbReference type="UniPathway" id="UPA00275">
    <property type="reaction ID" value="UER00404"/>
</dbReference>
<dbReference type="Proteomes" id="UP000008148">
    <property type="component" value="Chromosome"/>
</dbReference>
<dbReference type="GO" id="GO:0005829">
    <property type="term" value="C:cytosol"/>
    <property type="evidence" value="ECO:0007669"/>
    <property type="project" value="TreeGrafter"/>
</dbReference>
<dbReference type="GO" id="GO:0009349">
    <property type="term" value="C:riboflavin synthase complex"/>
    <property type="evidence" value="ECO:0007669"/>
    <property type="project" value="InterPro"/>
</dbReference>
<dbReference type="GO" id="GO:0000906">
    <property type="term" value="F:6,7-dimethyl-8-ribityllumazine synthase activity"/>
    <property type="evidence" value="ECO:0007669"/>
    <property type="project" value="UniProtKB-UniRule"/>
</dbReference>
<dbReference type="GO" id="GO:0009231">
    <property type="term" value="P:riboflavin biosynthetic process"/>
    <property type="evidence" value="ECO:0007669"/>
    <property type="project" value="UniProtKB-UniRule"/>
</dbReference>
<dbReference type="CDD" id="cd09209">
    <property type="entry name" value="Lumazine_synthase-I"/>
    <property type="match status" value="1"/>
</dbReference>
<dbReference type="FunFam" id="3.40.50.960:FF:000001">
    <property type="entry name" value="6,7-dimethyl-8-ribityllumazine synthase"/>
    <property type="match status" value="1"/>
</dbReference>
<dbReference type="Gene3D" id="3.40.50.960">
    <property type="entry name" value="Lumazine/riboflavin synthase"/>
    <property type="match status" value="1"/>
</dbReference>
<dbReference type="HAMAP" id="MF_00178">
    <property type="entry name" value="Lumazine_synth"/>
    <property type="match status" value="1"/>
</dbReference>
<dbReference type="InterPro" id="IPR034964">
    <property type="entry name" value="LS"/>
</dbReference>
<dbReference type="InterPro" id="IPR002180">
    <property type="entry name" value="LS/RS"/>
</dbReference>
<dbReference type="InterPro" id="IPR036467">
    <property type="entry name" value="LS/RS_sf"/>
</dbReference>
<dbReference type="NCBIfam" id="TIGR00114">
    <property type="entry name" value="lumazine-synth"/>
    <property type="match status" value="1"/>
</dbReference>
<dbReference type="NCBIfam" id="NF000812">
    <property type="entry name" value="PRK00061.1-4"/>
    <property type="match status" value="1"/>
</dbReference>
<dbReference type="PANTHER" id="PTHR21058:SF0">
    <property type="entry name" value="6,7-DIMETHYL-8-RIBITYLLUMAZINE SYNTHASE"/>
    <property type="match status" value="1"/>
</dbReference>
<dbReference type="PANTHER" id="PTHR21058">
    <property type="entry name" value="6,7-DIMETHYL-8-RIBITYLLUMAZINE SYNTHASE DMRL SYNTHASE LUMAZINE SYNTHASE"/>
    <property type="match status" value="1"/>
</dbReference>
<dbReference type="Pfam" id="PF00885">
    <property type="entry name" value="DMRL_synthase"/>
    <property type="match status" value="1"/>
</dbReference>
<dbReference type="SUPFAM" id="SSF52121">
    <property type="entry name" value="Lumazine synthase"/>
    <property type="match status" value="1"/>
</dbReference>